<sequence>MGDRHTIQQNLNGLLSKLNDPDPDMRYMSLNDLYGILSNPCSSYLAHDQASATRLAEGLLKALDDQHGDVQNQALKCLGPLVARLPLEGLRTLLERLSNLTTSQTIDTSVPNTALRVIVTALPRPQPNQAPSPDANMAYSAVSEVLIPRLIGPGPHKRRGSVTKGMLEKDPAKGFSSDAIDVLIQVASCFGALLQESELTALEKAVMSIIDNDTAGTVVTKRALAAISALVVYFSDEQFGILVSELVERFNSPQLSTVHRRHLIAAVGCLARTVPAKFGPHLSTLAPFIFSAVGEDNLEVSHVLHYLCTSASNVYSSRNKPKIYHQYRQLPKEKLITGM</sequence>
<gene>
    <name type="primary">candA-N</name>
    <name type="ORF">AN2462</name>
</gene>
<comment type="function">
    <text evidence="1">Assembly factor of SCF (SKP1-CUL1-F-box protein) E3 ubiquitin ligase complexes that promotes the exchange of the substrate-recognition F-box subunit in SCF complexes, thereby playing a key role in the cellular repertoire of SCF complexes. Acts as a F-box protein exchange factor when interacting with candA-C (By similarity).</text>
</comment>
<comment type="subunit">
    <text evidence="2">Interacts with candA-C. Interacts with unneddylated cullins culA and culD; interaction occurs only when complexed with candA-C.</text>
</comment>
<comment type="subcellular location">
    <subcellularLocation>
        <location evidence="2">Nucleus</location>
    </subcellularLocation>
    <text>Requires candA-C for nuclear localization.</text>
</comment>
<comment type="disruption phenotype">
    <text evidence="2">Cells show a dark red color when grown on an air-medium interface that induces development. Cells are able to initiate the cycle but are blocked in the initial stage of early nest formation. Cells exhibit reduction in asexual development and block in sexual development.</text>
</comment>
<comment type="miscellaneous">
    <text>In E.nidulans, CAND1 is separated into 2 distinct proteins: candA-N and candA-C (AC Q5BAH2), corresponding to the N- and C-termini respectively of the protein in other species.</text>
</comment>
<comment type="sequence caution" evidence="3">
    <conflict type="erroneous gene model prediction">
        <sequence resource="EMBL-CDS" id="EAA64168"/>
    </conflict>
</comment>
<keyword id="KW-0539">Nucleus</keyword>
<keyword id="KW-1185">Reference proteome</keyword>
<keyword id="KW-0677">Repeat</keyword>
<keyword id="KW-0833">Ubl conjugation pathway</keyword>
<proteinExistence type="evidence at protein level"/>
<feature type="chain" id="PRO_0000422244" description="Cullin-associated NEDD8-dissociated protein 1, N-terminal part">
    <location>
        <begin position="1"/>
        <end position="339"/>
    </location>
</feature>
<feature type="repeat" description="HEAT 1">
    <location>
        <begin position="5"/>
        <end position="42"/>
    </location>
</feature>
<feature type="repeat" description="HEAT 2">
    <location>
        <begin position="50"/>
        <end position="87"/>
    </location>
</feature>
<name>CAN1N_EMENI</name>
<evidence type="ECO:0000250" key="1"/>
<evidence type="ECO:0000269" key="2">
    <source>
    </source>
</evidence>
<evidence type="ECO:0000305" key="3"/>
<protein>
    <recommendedName>
        <fullName>Cullin-associated NEDD8-dissociated protein 1, N-terminal part</fullName>
    </recommendedName>
    <alternativeName>
        <fullName>Cullin-associated and neddylation-dissociated protein 1, N-terminal part</fullName>
    </alternativeName>
</protein>
<organism>
    <name type="scientific">Emericella nidulans (strain FGSC A4 / ATCC 38163 / CBS 112.46 / NRRL 194 / M139)</name>
    <name type="common">Aspergillus nidulans</name>
    <dbReference type="NCBI Taxonomy" id="227321"/>
    <lineage>
        <taxon>Eukaryota</taxon>
        <taxon>Fungi</taxon>
        <taxon>Dikarya</taxon>
        <taxon>Ascomycota</taxon>
        <taxon>Pezizomycotina</taxon>
        <taxon>Eurotiomycetes</taxon>
        <taxon>Eurotiomycetidae</taxon>
        <taxon>Eurotiales</taxon>
        <taxon>Aspergillaceae</taxon>
        <taxon>Aspergillus</taxon>
        <taxon>Aspergillus subgen. Nidulantes</taxon>
    </lineage>
</organism>
<accession>C8VP82</accession>
<accession>Q5BAG8</accession>
<dbReference type="EMBL" id="AACD01000040">
    <property type="protein sequence ID" value="EAA64168.1"/>
    <property type="status" value="ALT_SEQ"/>
    <property type="molecule type" value="Genomic_DNA"/>
</dbReference>
<dbReference type="EMBL" id="BN001307">
    <property type="protein sequence ID" value="CBF86906.1"/>
    <property type="molecule type" value="Genomic_DNA"/>
</dbReference>
<dbReference type="RefSeq" id="XP_660066.1">
    <property type="nucleotide sequence ID" value="XM_654974.1"/>
</dbReference>
<dbReference type="SMR" id="C8VP82"/>
<dbReference type="STRING" id="227321.C8VP82"/>
<dbReference type="EnsemblFungi" id="CBF86906">
    <property type="protein sequence ID" value="CBF86906"/>
    <property type="gene ID" value="ANIA_10306"/>
</dbReference>
<dbReference type="VEuPathDB" id="FungiDB:AN10306"/>
<dbReference type="eggNOG" id="KOG1824">
    <property type="taxonomic scope" value="Eukaryota"/>
</dbReference>
<dbReference type="HOGENOM" id="CLU_357759_0_0_1"/>
<dbReference type="InParanoid" id="C8VP82"/>
<dbReference type="OMA" id="MAIIQND"/>
<dbReference type="OrthoDB" id="6260732at2759"/>
<dbReference type="Proteomes" id="UP000000560">
    <property type="component" value="Chromosome VII"/>
</dbReference>
<dbReference type="GO" id="GO:0005634">
    <property type="term" value="C:nucleus"/>
    <property type="evidence" value="ECO:0000314"/>
    <property type="project" value="AspGD"/>
</dbReference>
<dbReference type="GO" id="GO:0010265">
    <property type="term" value="P:SCF complex assembly"/>
    <property type="evidence" value="ECO:0007669"/>
    <property type="project" value="InterPro"/>
</dbReference>
<dbReference type="GO" id="GO:0043935">
    <property type="term" value="P:sexual sporulation resulting in formation of a cellular spore"/>
    <property type="evidence" value="ECO:0000315"/>
    <property type="project" value="AspGD"/>
</dbReference>
<dbReference type="GO" id="GO:0000909">
    <property type="term" value="P:sporocarp development involved in sexual reproduction"/>
    <property type="evidence" value="ECO:0000315"/>
    <property type="project" value="AspGD"/>
</dbReference>
<dbReference type="Gene3D" id="1.25.10.10">
    <property type="entry name" value="Leucine-rich Repeat Variant"/>
    <property type="match status" value="1"/>
</dbReference>
<dbReference type="InterPro" id="IPR011989">
    <property type="entry name" value="ARM-like"/>
</dbReference>
<dbReference type="InterPro" id="IPR016024">
    <property type="entry name" value="ARM-type_fold"/>
</dbReference>
<dbReference type="InterPro" id="IPR039852">
    <property type="entry name" value="CAND1/CAND2"/>
</dbReference>
<dbReference type="PANTHER" id="PTHR12696">
    <property type="entry name" value="TIP120"/>
    <property type="match status" value="1"/>
</dbReference>
<dbReference type="SUPFAM" id="SSF48371">
    <property type="entry name" value="ARM repeat"/>
    <property type="match status" value="1"/>
</dbReference>
<reference key="1">
    <citation type="journal article" date="2005" name="Nature">
        <title>Sequencing of Aspergillus nidulans and comparative analysis with A. fumigatus and A. oryzae.</title>
        <authorList>
            <person name="Galagan J.E."/>
            <person name="Calvo S.E."/>
            <person name="Cuomo C."/>
            <person name="Ma L.-J."/>
            <person name="Wortman J.R."/>
            <person name="Batzoglou S."/>
            <person name="Lee S.-I."/>
            <person name="Bastuerkmen M."/>
            <person name="Spevak C.C."/>
            <person name="Clutterbuck J."/>
            <person name="Kapitonov V."/>
            <person name="Jurka J."/>
            <person name="Scazzocchio C."/>
            <person name="Farman M.L."/>
            <person name="Butler J."/>
            <person name="Purcell S."/>
            <person name="Harris S."/>
            <person name="Braus G.H."/>
            <person name="Draht O."/>
            <person name="Busch S."/>
            <person name="D'Enfert C."/>
            <person name="Bouchier C."/>
            <person name="Goldman G.H."/>
            <person name="Bell-Pedersen D."/>
            <person name="Griffiths-Jones S."/>
            <person name="Doonan J.H."/>
            <person name="Yu J."/>
            <person name="Vienken K."/>
            <person name="Pain A."/>
            <person name="Freitag M."/>
            <person name="Selker E.U."/>
            <person name="Archer D.B."/>
            <person name="Penalva M.A."/>
            <person name="Oakley B.R."/>
            <person name="Momany M."/>
            <person name="Tanaka T."/>
            <person name="Kumagai T."/>
            <person name="Asai K."/>
            <person name="Machida M."/>
            <person name="Nierman W.C."/>
            <person name="Denning D.W."/>
            <person name="Caddick M.X."/>
            <person name="Hynes M."/>
            <person name="Paoletti M."/>
            <person name="Fischer R."/>
            <person name="Miller B.L."/>
            <person name="Dyer P.S."/>
            <person name="Sachs M.S."/>
            <person name="Osmani S.A."/>
            <person name="Birren B.W."/>
        </authorList>
    </citation>
    <scope>NUCLEOTIDE SEQUENCE [LARGE SCALE GENOMIC DNA]</scope>
    <source>
        <strain>FGSC A4 / ATCC 38163 / CBS 112.46 / NRRL 194 / M139</strain>
    </source>
</reference>
<reference key="2">
    <citation type="journal article" date="2009" name="Fungal Genet. Biol.">
        <title>The 2008 update of the Aspergillus nidulans genome annotation: a community effort.</title>
        <authorList>
            <person name="Wortman J.R."/>
            <person name="Gilsenan J.M."/>
            <person name="Joardar V."/>
            <person name="Deegan J."/>
            <person name="Clutterbuck J."/>
            <person name="Andersen M.R."/>
            <person name="Archer D."/>
            <person name="Bencina M."/>
            <person name="Braus G."/>
            <person name="Coutinho P."/>
            <person name="von Dohren H."/>
            <person name="Doonan J."/>
            <person name="Driessen A.J."/>
            <person name="Durek P."/>
            <person name="Espeso E."/>
            <person name="Fekete E."/>
            <person name="Flipphi M."/>
            <person name="Estrada C.G."/>
            <person name="Geysens S."/>
            <person name="Goldman G."/>
            <person name="de Groot P.W."/>
            <person name="Hansen K."/>
            <person name="Harris S.D."/>
            <person name="Heinekamp T."/>
            <person name="Helmstaedt K."/>
            <person name="Henrissat B."/>
            <person name="Hofmann G."/>
            <person name="Homan T."/>
            <person name="Horio T."/>
            <person name="Horiuchi H."/>
            <person name="James S."/>
            <person name="Jones M."/>
            <person name="Karaffa L."/>
            <person name="Karanyi Z."/>
            <person name="Kato M."/>
            <person name="Keller N."/>
            <person name="Kelly D.E."/>
            <person name="Kiel J.A."/>
            <person name="Kim J.M."/>
            <person name="van der Klei I.J."/>
            <person name="Klis F.M."/>
            <person name="Kovalchuk A."/>
            <person name="Krasevec N."/>
            <person name="Kubicek C.P."/>
            <person name="Liu B."/>
            <person name="Maccabe A."/>
            <person name="Meyer V."/>
            <person name="Mirabito P."/>
            <person name="Miskei M."/>
            <person name="Mos M."/>
            <person name="Mullins J."/>
            <person name="Nelson D.R."/>
            <person name="Nielsen J."/>
            <person name="Oakley B.R."/>
            <person name="Osmani S.A."/>
            <person name="Pakula T."/>
            <person name="Paszewski A."/>
            <person name="Paulsen I."/>
            <person name="Pilsyk S."/>
            <person name="Pocsi I."/>
            <person name="Punt P.J."/>
            <person name="Ram A.F."/>
            <person name="Ren Q."/>
            <person name="Robellet X."/>
            <person name="Robson G."/>
            <person name="Seiboth B."/>
            <person name="van Solingen P."/>
            <person name="Specht T."/>
            <person name="Sun J."/>
            <person name="Taheri-Talesh N."/>
            <person name="Takeshita N."/>
            <person name="Ussery D."/>
            <person name="vanKuyk P.A."/>
            <person name="Visser H."/>
            <person name="van de Vondervoort P.J."/>
            <person name="de Vries R.P."/>
            <person name="Walton J."/>
            <person name="Xiang X."/>
            <person name="Xiong Y."/>
            <person name="Zeng A.P."/>
            <person name="Brandt B.W."/>
            <person name="Cornell M.J."/>
            <person name="van den Hondel C.A."/>
            <person name="Visser J."/>
            <person name="Oliver S.G."/>
            <person name="Turner G."/>
        </authorList>
    </citation>
    <scope>GENOME REANNOTATION</scope>
    <source>
        <strain>FGSC A4 / ATCC 38163 / CBS 112.46 / NRRL 194 / M139</strain>
    </source>
</reference>
<reference key="3">
    <citation type="journal article" date="2011" name="Mol. Biol. Cell">
        <title>Recruitment of the inhibitor Cand1 to the cullin substrate adaptor site mediates interaction to the neddylation site.</title>
        <authorList>
            <person name="Helmstaedt K."/>
            <person name="Schwier E.U."/>
            <person name="Christmann M."/>
            <person name="Nahlik K."/>
            <person name="Westermann M."/>
            <person name="Harting R."/>
            <person name="Grond S."/>
            <person name="Busch S."/>
            <person name="Braus G.H."/>
        </authorList>
    </citation>
    <scope>SUBCELLULAR LOCATION</scope>
    <scope>DISRUPTION PHENOTYPE</scope>
    <scope>INTERACTION WITH CANDA-C; CULA AND CULD</scope>
</reference>